<sequence length="368" mass="41493">MSILDVIKQSNDMMPESYKELSRKDMETRVAAIKKKFGSRLFIPGHHYQKDEVIQFADQTGDSLQLAQVAEKNKEADYIVFCGVHFMAETADMLTSEQQTVVLPDMRAGCSMADMADMQQTNRAWKKLQHIFGDTIIPLTYVNSTAEIKAFVGKHGGATVTSSNAKKVLEWAFTQKKRILFLPDQHLGRNTAYDLGIALEDMAVWDPMKDELVAESGHTNVKVILWKGHCSVHEKFTTKNIHDMRERDPDIQIIVHPECSHEVVTLSDDNGSTKYIIDTINQAPAGSKWAIGTEMNLVQRIIHEHPDKQIESLNPDMCPCLTMNRIDLPHLLWSLEQIEKGEPSGVIKVPKAIQEDALLALNRMLSIT</sequence>
<dbReference type="EC" id="2.5.1.72" evidence="2 3"/>
<dbReference type="EMBL" id="Y15896">
    <property type="protein sequence ID" value="CAB75321.1"/>
    <property type="status" value="ALT_INIT"/>
    <property type="molecule type" value="Genomic_DNA"/>
</dbReference>
<dbReference type="EMBL" id="AL009126">
    <property type="protein sequence ID" value="CAB14745.1"/>
    <property type="molecule type" value="Genomic_DNA"/>
</dbReference>
<dbReference type="PIR" id="E69663">
    <property type="entry name" value="E69663"/>
</dbReference>
<dbReference type="RefSeq" id="NP_390663.1">
    <property type="nucleotide sequence ID" value="NC_000964.3"/>
</dbReference>
<dbReference type="RefSeq" id="WP_003229691.1">
    <property type="nucleotide sequence ID" value="NZ_OZ025638.1"/>
</dbReference>
<dbReference type="SMR" id="Q9KWZ1"/>
<dbReference type="FunCoup" id="Q9KWZ1">
    <property type="interactions" value="416"/>
</dbReference>
<dbReference type="IntAct" id="Q9KWZ1">
    <property type="interactions" value="1"/>
</dbReference>
<dbReference type="MINT" id="Q9KWZ1"/>
<dbReference type="STRING" id="224308.BSU27850"/>
<dbReference type="PaxDb" id="224308-BSU27850"/>
<dbReference type="DNASU" id="937522"/>
<dbReference type="EnsemblBacteria" id="CAB14745">
    <property type="protein sequence ID" value="CAB14745"/>
    <property type="gene ID" value="BSU_27850"/>
</dbReference>
<dbReference type="GeneID" id="937522"/>
<dbReference type="KEGG" id="bsu:BSU27850"/>
<dbReference type="PATRIC" id="fig|224308.179.peg.3026"/>
<dbReference type="eggNOG" id="COG0379">
    <property type="taxonomic scope" value="Bacteria"/>
</dbReference>
<dbReference type="InParanoid" id="Q9KWZ1"/>
<dbReference type="OrthoDB" id="9801204at2"/>
<dbReference type="PhylomeDB" id="Q9KWZ1"/>
<dbReference type="BioCyc" id="BSUB:BSU27850-MONOMER"/>
<dbReference type="UniPathway" id="UPA00253">
    <property type="reaction ID" value="UER00327"/>
</dbReference>
<dbReference type="Proteomes" id="UP000001570">
    <property type="component" value="Chromosome"/>
</dbReference>
<dbReference type="GO" id="GO:0005829">
    <property type="term" value="C:cytosol"/>
    <property type="evidence" value="ECO:0000318"/>
    <property type="project" value="GO_Central"/>
</dbReference>
<dbReference type="GO" id="GO:0051539">
    <property type="term" value="F:4 iron, 4 sulfur cluster binding"/>
    <property type="evidence" value="ECO:0000318"/>
    <property type="project" value="GO_Central"/>
</dbReference>
<dbReference type="GO" id="GO:0046872">
    <property type="term" value="F:metal ion binding"/>
    <property type="evidence" value="ECO:0007669"/>
    <property type="project" value="UniProtKB-KW"/>
</dbReference>
<dbReference type="GO" id="GO:0008987">
    <property type="term" value="F:quinolinate synthetase A activity"/>
    <property type="evidence" value="ECO:0000318"/>
    <property type="project" value="GO_Central"/>
</dbReference>
<dbReference type="GO" id="GO:0034628">
    <property type="term" value="P:'de novo' NAD biosynthetic process from L-aspartate"/>
    <property type="evidence" value="ECO:0000318"/>
    <property type="project" value="GO_Central"/>
</dbReference>
<dbReference type="FunFam" id="3.40.50.10800:FF:000001">
    <property type="entry name" value="Quinolinate synthase A"/>
    <property type="match status" value="1"/>
</dbReference>
<dbReference type="Gene3D" id="3.40.50.10800">
    <property type="entry name" value="NadA-like"/>
    <property type="match status" value="3"/>
</dbReference>
<dbReference type="HAMAP" id="MF_00569">
    <property type="entry name" value="NadA_type3"/>
    <property type="match status" value="1"/>
</dbReference>
<dbReference type="InterPro" id="IPR003473">
    <property type="entry name" value="NadA"/>
</dbReference>
<dbReference type="InterPro" id="IPR036094">
    <property type="entry name" value="NadA_sf"/>
</dbReference>
<dbReference type="InterPro" id="IPR023515">
    <property type="entry name" value="Quinolinate_synth_A_type3"/>
</dbReference>
<dbReference type="NCBIfam" id="TIGR00550">
    <property type="entry name" value="nadA"/>
    <property type="match status" value="1"/>
</dbReference>
<dbReference type="NCBIfam" id="NF006880">
    <property type="entry name" value="PRK09375.2-1"/>
    <property type="match status" value="1"/>
</dbReference>
<dbReference type="NCBIfam" id="NF006883">
    <property type="entry name" value="PRK09375.2-4"/>
    <property type="match status" value="1"/>
</dbReference>
<dbReference type="PANTHER" id="PTHR30573:SF0">
    <property type="entry name" value="QUINOLINATE SYNTHASE, CHLOROPLASTIC"/>
    <property type="match status" value="1"/>
</dbReference>
<dbReference type="PANTHER" id="PTHR30573">
    <property type="entry name" value="QUINOLINATE SYNTHETASE A"/>
    <property type="match status" value="1"/>
</dbReference>
<dbReference type="Pfam" id="PF02445">
    <property type="entry name" value="NadA"/>
    <property type="match status" value="1"/>
</dbReference>
<dbReference type="SUPFAM" id="SSF142754">
    <property type="entry name" value="NadA-like"/>
    <property type="match status" value="1"/>
</dbReference>
<proteinExistence type="evidence at protein level"/>
<organism>
    <name type="scientific">Bacillus subtilis (strain 168)</name>
    <dbReference type="NCBI Taxonomy" id="224308"/>
    <lineage>
        <taxon>Bacteria</taxon>
        <taxon>Bacillati</taxon>
        <taxon>Bacillota</taxon>
        <taxon>Bacilli</taxon>
        <taxon>Bacillales</taxon>
        <taxon>Bacillaceae</taxon>
        <taxon>Bacillus</taxon>
    </lineage>
</organism>
<name>NADA_BACSU</name>
<feature type="chain" id="PRO_0000155816" description="Quinolinate synthase">
    <location>
        <begin position="1"/>
        <end position="368"/>
    </location>
</feature>
<feature type="binding site" evidence="1 2">
    <location>
        <position position="46"/>
    </location>
    <ligand>
        <name>iminosuccinate</name>
        <dbReference type="ChEBI" id="CHEBI:77875"/>
    </ligand>
</feature>
<feature type="binding site" evidence="1 2">
    <location>
        <position position="63"/>
    </location>
    <ligand>
        <name>iminosuccinate</name>
        <dbReference type="ChEBI" id="CHEBI:77875"/>
    </ligand>
</feature>
<feature type="binding site" evidence="2 3">
    <location>
        <position position="110"/>
    </location>
    <ligand>
        <name>[4Fe-4S] cluster</name>
        <dbReference type="ChEBI" id="CHEBI:49883"/>
    </ligand>
</feature>
<feature type="binding site" evidence="1 2">
    <location>
        <begin position="141"/>
        <end position="143"/>
    </location>
    <ligand>
        <name>iminosuccinate</name>
        <dbReference type="ChEBI" id="CHEBI:77875"/>
    </ligand>
</feature>
<feature type="binding site" evidence="1 2">
    <location>
        <position position="162"/>
    </location>
    <ligand>
        <name>iminosuccinate</name>
        <dbReference type="ChEBI" id="CHEBI:77875"/>
    </ligand>
</feature>
<feature type="binding site" evidence="2 3">
    <location>
        <position position="230"/>
    </location>
    <ligand>
        <name>[4Fe-4S] cluster</name>
        <dbReference type="ChEBI" id="CHEBI:49883"/>
    </ligand>
</feature>
<feature type="binding site" evidence="1 2">
    <location>
        <begin position="256"/>
        <end position="258"/>
    </location>
    <ligand>
        <name>iminosuccinate</name>
        <dbReference type="ChEBI" id="CHEBI:77875"/>
    </ligand>
</feature>
<feature type="binding site" evidence="1 2">
    <location>
        <position position="273"/>
    </location>
    <ligand>
        <name>iminosuccinate</name>
        <dbReference type="ChEBI" id="CHEBI:77875"/>
    </ligand>
</feature>
<feature type="binding site" evidence="2 3">
    <location>
        <position position="320"/>
    </location>
    <ligand>
        <name>[4Fe-4S] cluster</name>
        <dbReference type="ChEBI" id="CHEBI:49883"/>
    </ligand>
</feature>
<feature type="mutagenesis site" description="No change in activity and in iron content." evidence="3">
    <original>C</original>
    <variation>S</variation>
    <location>
        <position position="82"/>
    </location>
</feature>
<feature type="mutagenesis site" description="Loss of activity. Does not bind iron. Cannot complement the deletion mutant." evidence="3">
    <original>C</original>
    <variation>S</variation>
    <location>
        <position position="110"/>
    </location>
</feature>
<feature type="mutagenesis site" description="Loss of activity. Does not bind iron. Cannot complement the deletion mutant." evidence="3">
    <original>C</original>
    <variation>S</variation>
    <location>
        <position position="230"/>
    </location>
</feature>
<feature type="mutagenesis site" description="No change in activity and in iron content." evidence="3">
    <original>C</original>
    <variation>S</variation>
    <location>
        <position position="259"/>
    </location>
</feature>
<feature type="mutagenesis site" description="No change in activity and in iron content. Cannot complement the deletion mutant. Lacks activity and does not bind iron; when associated with S-320." evidence="3">
    <original>C</original>
    <variation>S</variation>
    <location>
        <position position="318"/>
    </location>
</feature>
<feature type="mutagenesis site" description="Loss of activity. Decreases iron binding. Cannot complement the deletion mutant. Lacks activity and does not bind iron; when associated with S-318." evidence="3">
    <original>C</original>
    <variation>S</variation>
    <location>
        <position position="320"/>
    </location>
</feature>
<comment type="function">
    <text evidence="2 3">Catalyzes the condensation of iminoaspartate with dihydroxyacetone phosphate to form quinolinate.</text>
</comment>
<comment type="catalytic activity">
    <reaction evidence="2 3">
        <text>iminosuccinate + dihydroxyacetone phosphate = quinolinate + phosphate + 2 H2O + H(+)</text>
        <dbReference type="Rhea" id="RHEA:25888"/>
        <dbReference type="ChEBI" id="CHEBI:15377"/>
        <dbReference type="ChEBI" id="CHEBI:15378"/>
        <dbReference type="ChEBI" id="CHEBI:29959"/>
        <dbReference type="ChEBI" id="CHEBI:43474"/>
        <dbReference type="ChEBI" id="CHEBI:57642"/>
        <dbReference type="ChEBI" id="CHEBI:77875"/>
        <dbReference type="EC" id="2.5.1.72"/>
    </reaction>
    <physiologicalReaction direction="left-to-right" evidence="2 3">
        <dbReference type="Rhea" id="RHEA:25889"/>
    </physiologicalReaction>
</comment>
<comment type="cofactor">
    <cofactor evidence="2 3">
        <name>[4Fe-4S] cluster</name>
        <dbReference type="ChEBI" id="CHEBI:49883"/>
    </cofactor>
    <text evidence="2 3">Binds 1 [4Fe-4S] cluster per subunit.</text>
</comment>
<comment type="biophysicochemical properties">
    <kinetics>
        <KM evidence="3">0.36 mM for dihydroxyacetone phosphate</KM>
    </kinetics>
</comment>
<comment type="pathway">
    <text evidence="2 3">Cofactor biosynthesis; NAD(+) biosynthesis; quinolinate from iminoaspartate: step 1/1.</text>
</comment>
<comment type="subunit">
    <text evidence="3">Homotrimer.</text>
</comment>
<comment type="subcellular location">
    <subcellularLocation>
        <location evidence="2">Cytoplasm</location>
    </subcellularLocation>
</comment>
<comment type="disruption phenotype">
    <text evidence="3">Mutant requires exogenous nicotinic acid for growth.</text>
</comment>
<comment type="similarity">
    <text evidence="2">Belongs to the quinolinate synthase family. Type 3 subfamily.</text>
</comment>
<comment type="sequence caution" evidence="5">
    <conflict type="erroneous initiation">
        <sequence resource="EMBL-CDS" id="CAB75321"/>
    </conflict>
</comment>
<gene>
    <name evidence="2 4" type="primary">nadA</name>
    <name type="ordered locus">BSU27850</name>
</gene>
<reference key="1">
    <citation type="submission" date="1997-12" db="EMBL/GenBank/DDBJ databases">
        <title>A 17.8 kb segment in the spoVB-nadC region of the Bacillus subtilis 168 chromosome: sequencing and ruv operon identification.</title>
        <authorList>
            <person name="Tosato V."/>
            <person name="Bolotin A."/>
            <person name="Bertani I."/>
            <person name="Valentino I."/>
            <person name="Bruschi C.V."/>
        </authorList>
    </citation>
    <scope>NUCLEOTIDE SEQUENCE [GENOMIC DNA]</scope>
    <source>
        <strain>168</strain>
    </source>
</reference>
<reference key="2">
    <citation type="journal article" date="1997" name="Nature">
        <title>The complete genome sequence of the Gram-positive bacterium Bacillus subtilis.</title>
        <authorList>
            <person name="Kunst F."/>
            <person name="Ogasawara N."/>
            <person name="Moszer I."/>
            <person name="Albertini A.M."/>
            <person name="Alloni G."/>
            <person name="Azevedo V."/>
            <person name="Bertero M.G."/>
            <person name="Bessieres P."/>
            <person name="Bolotin A."/>
            <person name="Borchert S."/>
            <person name="Borriss R."/>
            <person name="Boursier L."/>
            <person name="Brans A."/>
            <person name="Braun M."/>
            <person name="Brignell S.C."/>
            <person name="Bron S."/>
            <person name="Brouillet S."/>
            <person name="Bruschi C.V."/>
            <person name="Caldwell B."/>
            <person name="Capuano V."/>
            <person name="Carter N.M."/>
            <person name="Choi S.-K."/>
            <person name="Codani J.-J."/>
            <person name="Connerton I.F."/>
            <person name="Cummings N.J."/>
            <person name="Daniel R.A."/>
            <person name="Denizot F."/>
            <person name="Devine K.M."/>
            <person name="Duesterhoeft A."/>
            <person name="Ehrlich S.D."/>
            <person name="Emmerson P.T."/>
            <person name="Entian K.-D."/>
            <person name="Errington J."/>
            <person name="Fabret C."/>
            <person name="Ferrari E."/>
            <person name="Foulger D."/>
            <person name="Fritz C."/>
            <person name="Fujita M."/>
            <person name="Fujita Y."/>
            <person name="Fuma S."/>
            <person name="Galizzi A."/>
            <person name="Galleron N."/>
            <person name="Ghim S.-Y."/>
            <person name="Glaser P."/>
            <person name="Goffeau A."/>
            <person name="Golightly E.J."/>
            <person name="Grandi G."/>
            <person name="Guiseppi G."/>
            <person name="Guy B.J."/>
            <person name="Haga K."/>
            <person name="Haiech J."/>
            <person name="Harwood C.R."/>
            <person name="Henaut A."/>
            <person name="Hilbert H."/>
            <person name="Holsappel S."/>
            <person name="Hosono S."/>
            <person name="Hullo M.-F."/>
            <person name="Itaya M."/>
            <person name="Jones L.-M."/>
            <person name="Joris B."/>
            <person name="Karamata D."/>
            <person name="Kasahara Y."/>
            <person name="Klaerr-Blanchard M."/>
            <person name="Klein C."/>
            <person name="Kobayashi Y."/>
            <person name="Koetter P."/>
            <person name="Koningstein G."/>
            <person name="Krogh S."/>
            <person name="Kumano M."/>
            <person name="Kurita K."/>
            <person name="Lapidus A."/>
            <person name="Lardinois S."/>
            <person name="Lauber J."/>
            <person name="Lazarevic V."/>
            <person name="Lee S.-M."/>
            <person name="Levine A."/>
            <person name="Liu H."/>
            <person name="Masuda S."/>
            <person name="Mauel C."/>
            <person name="Medigue C."/>
            <person name="Medina N."/>
            <person name="Mellado R.P."/>
            <person name="Mizuno M."/>
            <person name="Moestl D."/>
            <person name="Nakai S."/>
            <person name="Noback M."/>
            <person name="Noone D."/>
            <person name="O'Reilly M."/>
            <person name="Ogawa K."/>
            <person name="Ogiwara A."/>
            <person name="Oudega B."/>
            <person name="Park S.-H."/>
            <person name="Parro V."/>
            <person name="Pohl T.M."/>
            <person name="Portetelle D."/>
            <person name="Porwollik S."/>
            <person name="Prescott A.M."/>
            <person name="Presecan E."/>
            <person name="Pujic P."/>
            <person name="Purnelle B."/>
            <person name="Rapoport G."/>
            <person name="Rey M."/>
            <person name="Reynolds S."/>
            <person name="Rieger M."/>
            <person name="Rivolta C."/>
            <person name="Rocha E."/>
            <person name="Roche B."/>
            <person name="Rose M."/>
            <person name="Sadaie Y."/>
            <person name="Sato T."/>
            <person name="Scanlan E."/>
            <person name="Schleich S."/>
            <person name="Schroeter R."/>
            <person name="Scoffone F."/>
            <person name="Sekiguchi J."/>
            <person name="Sekowska A."/>
            <person name="Seror S.J."/>
            <person name="Serror P."/>
            <person name="Shin B.-S."/>
            <person name="Soldo B."/>
            <person name="Sorokin A."/>
            <person name="Tacconi E."/>
            <person name="Takagi T."/>
            <person name="Takahashi H."/>
            <person name="Takemaru K."/>
            <person name="Takeuchi M."/>
            <person name="Tamakoshi A."/>
            <person name="Tanaka T."/>
            <person name="Terpstra P."/>
            <person name="Tognoni A."/>
            <person name="Tosato V."/>
            <person name="Uchiyama S."/>
            <person name="Vandenbol M."/>
            <person name="Vannier F."/>
            <person name="Vassarotti A."/>
            <person name="Viari A."/>
            <person name="Wambutt R."/>
            <person name="Wedler E."/>
            <person name="Wedler H."/>
            <person name="Weitzenegger T."/>
            <person name="Winters P."/>
            <person name="Wipat A."/>
            <person name="Yamamoto H."/>
            <person name="Yamane K."/>
            <person name="Yasumoto K."/>
            <person name="Yata K."/>
            <person name="Yoshida K."/>
            <person name="Yoshikawa H.-F."/>
            <person name="Zumstein E."/>
            <person name="Yoshikawa H."/>
            <person name="Danchin A."/>
        </authorList>
    </citation>
    <scope>NUCLEOTIDE SEQUENCE [LARGE SCALE GENOMIC DNA]</scope>
    <source>
        <strain>168</strain>
    </source>
</reference>
<reference key="3">
    <citation type="journal article" date="2008" name="FEBS J.">
        <title>Characterization of L-aspartate oxidase and quinolinate synthase from Bacillus subtilis.</title>
        <authorList>
            <person name="Marinoni I."/>
            <person name="Nonnis S."/>
            <person name="Monteferrante C."/>
            <person name="Heathcote P."/>
            <person name="Haertig E."/>
            <person name="Boettger L.H."/>
            <person name="Trautwein A.X."/>
            <person name="Negri A."/>
            <person name="Albertini A.M."/>
            <person name="Tedeschi G."/>
        </authorList>
    </citation>
    <scope>FUNCTION</scope>
    <scope>CATALYTIC ACTIVITY</scope>
    <scope>COFACTOR</scope>
    <scope>BIOPHYSICOCHEMICAL PROPERTIES</scope>
    <scope>PATHWAY</scope>
    <scope>SUBUNIT</scope>
    <scope>DISRUPTION PHENOTYPE</scope>
    <scope>MUTAGENESIS OF CYS-82; CYS-110; CYS-230; CYS-259; CYS-318 AND CYS-320</scope>
</reference>
<evidence type="ECO:0000250" key="1">
    <source>
        <dbReference type="UniProtKB" id="O57767"/>
    </source>
</evidence>
<evidence type="ECO:0000255" key="2">
    <source>
        <dbReference type="HAMAP-Rule" id="MF_00569"/>
    </source>
</evidence>
<evidence type="ECO:0000269" key="3">
    <source>
    </source>
</evidence>
<evidence type="ECO:0000303" key="4">
    <source>
    </source>
</evidence>
<evidence type="ECO:0000305" key="5"/>
<protein>
    <recommendedName>
        <fullName evidence="2 4">Quinolinate synthase</fullName>
        <ecNumber evidence="2 3">2.5.1.72</ecNumber>
    </recommendedName>
</protein>
<accession>Q9KWZ1</accession>
<accession>O32063</accession>
<keyword id="KW-0004">4Fe-4S</keyword>
<keyword id="KW-0963">Cytoplasm</keyword>
<keyword id="KW-0408">Iron</keyword>
<keyword id="KW-0411">Iron-sulfur</keyword>
<keyword id="KW-0479">Metal-binding</keyword>
<keyword id="KW-0662">Pyridine nucleotide biosynthesis</keyword>
<keyword id="KW-1185">Reference proteome</keyword>
<keyword id="KW-0808">Transferase</keyword>